<protein>
    <recommendedName>
        <fullName evidence="1">Small ribosomal subunit biogenesis GTPase RsgA</fullName>
        <ecNumber evidence="1">3.6.1.-</ecNumber>
    </recommendedName>
</protein>
<keyword id="KW-0963">Cytoplasm</keyword>
<keyword id="KW-0342">GTP-binding</keyword>
<keyword id="KW-0378">Hydrolase</keyword>
<keyword id="KW-0479">Metal-binding</keyword>
<keyword id="KW-0547">Nucleotide-binding</keyword>
<keyword id="KW-1185">Reference proteome</keyword>
<keyword id="KW-0690">Ribosome biogenesis</keyword>
<keyword id="KW-0694">RNA-binding</keyword>
<keyword id="KW-0699">rRNA-binding</keyword>
<keyword id="KW-0862">Zinc</keyword>
<comment type="function">
    <text evidence="1">One of several proteins that assist in the late maturation steps of the functional core of the 30S ribosomal subunit. Helps release RbfA from mature subunits. May play a role in the assembly of ribosomal proteins into the subunit. Circularly permuted GTPase that catalyzes slow GTP hydrolysis, GTPase activity is stimulated by the 30S ribosomal subunit.</text>
</comment>
<comment type="cofactor">
    <cofactor evidence="1">
        <name>Zn(2+)</name>
        <dbReference type="ChEBI" id="CHEBI:29105"/>
    </cofactor>
    <text evidence="1">Binds 1 zinc ion per subunit.</text>
</comment>
<comment type="subunit">
    <text evidence="1">Monomer. Associates with 30S ribosomal subunit, binds 16S rRNA.</text>
</comment>
<comment type="subcellular location">
    <subcellularLocation>
        <location evidence="1">Cytoplasm</location>
    </subcellularLocation>
</comment>
<comment type="similarity">
    <text evidence="1">Belongs to the TRAFAC class YlqF/YawG GTPase family. RsgA subfamily.</text>
</comment>
<sequence>MINKIQGFYYVESNGQVFECKLRGILKKTNNKYNCVVGDRVEISEDNSIVEIFKRDNLLIRPIVANVDYLAIQFAAKHPNIDFERINLLLLTAFYYKIKPIVIVNKIDYLTEEELVELKEKLSFLERISVPMFLISCYQNIGLEEVENFLKDKITVIGGPSGVGKSSFINFLQSERILKTGEISERLQRGKHTTRDSNMIKMKAGGYIIDTPGFSSIEVPNIENREELISLFPEFLNIDSCKFLNCSHIHEPGCNVKKQVEENKISKERYDFYKKTLEILLERWN</sequence>
<reference key="1">
    <citation type="journal article" date="2002" name="J. Bacteriol.">
        <title>Genome sequence and analysis of the oral bacterium Fusobacterium nucleatum strain ATCC 25586.</title>
        <authorList>
            <person name="Kapatral V."/>
            <person name="Anderson I."/>
            <person name="Ivanova N."/>
            <person name="Reznik G."/>
            <person name="Los T."/>
            <person name="Lykidis A."/>
            <person name="Bhattacharyya A."/>
            <person name="Bartman A."/>
            <person name="Gardner W."/>
            <person name="Grechkin G."/>
            <person name="Zhu L."/>
            <person name="Vasieva O."/>
            <person name="Chu L."/>
            <person name="Kogan Y."/>
            <person name="Chaga O."/>
            <person name="Goltsman E."/>
            <person name="Bernal A."/>
            <person name="Larsen N."/>
            <person name="D'Souza M."/>
            <person name="Walunas T."/>
            <person name="Pusch G."/>
            <person name="Haselkorn R."/>
            <person name="Fonstein M."/>
            <person name="Kyrpides N.C."/>
            <person name="Overbeek R."/>
        </authorList>
    </citation>
    <scope>NUCLEOTIDE SEQUENCE [LARGE SCALE GENOMIC DNA]</scope>
    <source>
        <strain>ATCC 25586 / DSM 15643 / BCRC 10681 / CIP 101130 / JCM 8532 / KCTC 2640 / LMG 13131 / VPI 4355</strain>
    </source>
</reference>
<dbReference type="EC" id="3.6.1.-" evidence="1"/>
<dbReference type="EMBL" id="AE009951">
    <property type="protein sequence ID" value="AAL94875.1"/>
    <property type="molecule type" value="Genomic_DNA"/>
</dbReference>
<dbReference type="RefSeq" id="NP_603576.1">
    <property type="nucleotide sequence ID" value="NC_003454.1"/>
</dbReference>
<dbReference type="SMR" id="Q8R685"/>
<dbReference type="FunCoup" id="Q8R685">
    <property type="interactions" value="243"/>
</dbReference>
<dbReference type="STRING" id="190304.FN0679"/>
<dbReference type="PaxDb" id="190304-FN0679"/>
<dbReference type="EnsemblBacteria" id="AAL94875">
    <property type="protein sequence ID" value="AAL94875"/>
    <property type="gene ID" value="FN0679"/>
</dbReference>
<dbReference type="KEGG" id="fnu:FN0679"/>
<dbReference type="PATRIC" id="fig|190304.8.peg.1244"/>
<dbReference type="eggNOG" id="COG1162">
    <property type="taxonomic scope" value="Bacteria"/>
</dbReference>
<dbReference type="HOGENOM" id="CLU_033617_2_1_0"/>
<dbReference type="InParanoid" id="Q8R685"/>
<dbReference type="BioCyc" id="FNUC190304:G1FZS-1265-MONOMER"/>
<dbReference type="Proteomes" id="UP000002521">
    <property type="component" value="Chromosome"/>
</dbReference>
<dbReference type="GO" id="GO:0005737">
    <property type="term" value="C:cytoplasm"/>
    <property type="evidence" value="ECO:0007669"/>
    <property type="project" value="UniProtKB-SubCell"/>
</dbReference>
<dbReference type="GO" id="GO:0005525">
    <property type="term" value="F:GTP binding"/>
    <property type="evidence" value="ECO:0007669"/>
    <property type="project" value="UniProtKB-UniRule"/>
</dbReference>
<dbReference type="GO" id="GO:0003924">
    <property type="term" value="F:GTPase activity"/>
    <property type="evidence" value="ECO:0007669"/>
    <property type="project" value="UniProtKB-UniRule"/>
</dbReference>
<dbReference type="GO" id="GO:0046872">
    <property type="term" value="F:metal ion binding"/>
    <property type="evidence" value="ECO:0007669"/>
    <property type="project" value="UniProtKB-KW"/>
</dbReference>
<dbReference type="GO" id="GO:0019843">
    <property type="term" value="F:rRNA binding"/>
    <property type="evidence" value="ECO:0007669"/>
    <property type="project" value="UniProtKB-KW"/>
</dbReference>
<dbReference type="GO" id="GO:0042274">
    <property type="term" value="P:ribosomal small subunit biogenesis"/>
    <property type="evidence" value="ECO:0007669"/>
    <property type="project" value="UniProtKB-UniRule"/>
</dbReference>
<dbReference type="CDD" id="cd01854">
    <property type="entry name" value="YjeQ_EngC"/>
    <property type="match status" value="1"/>
</dbReference>
<dbReference type="Gene3D" id="2.40.50.140">
    <property type="entry name" value="Nucleic acid-binding proteins"/>
    <property type="match status" value="1"/>
</dbReference>
<dbReference type="Gene3D" id="3.40.50.300">
    <property type="entry name" value="P-loop containing nucleotide triphosphate hydrolases"/>
    <property type="match status" value="1"/>
</dbReference>
<dbReference type="Gene3D" id="1.10.40.50">
    <property type="entry name" value="Probable gtpase engc, domain 3"/>
    <property type="match status" value="1"/>
</dbReference>
<dbReference type="HAMAP" id="MF_01820">
    <property type="entry name" value="GTPase_RsgA"/>
    <property type="match status" value="1"/>
</dbReference>
<dbReference type="InterPro" id="IPR030378">
    <property type="entry name" value="G_CP_dom"/>
</dbReference>
<dbReference type="InterPro" id="IPR012340">
    <property type="entry name" value="NA-bd_OB-fold"/>
</dbReference>
<dbReference type="InterPro" id="IPR027417">
    <property type="entry name" value="P-loop_NTPase"/>
</dbReference>
<dbReference type="InterPro" id="IPR004881">
    <property type="entry name" value="Ribosome_biogen_GTPase_RsgA"/>
</dbReference>
<dbReference type="InterPro" id="IPR010914">
    <property type="entry name" value="RsgA_GTPase_dom"/>
</dbReference>
<dbReference type="InterPro" id="IPR031944">
    <property type="entry name" value="RsgA_N"/>
</dbReference>
<dbReference type="NCBIfam" id="TIGR00157">
    <property type="entry name" value="ribosome small subunit-dependent GTPase A"/>
    <property type="match status" value="1"/>
</dbReference>
<dbReference type="PANTHER" id="PTHR32120">
    <property type="entry name" value="SMALL RIBOSOMAL SUBUNIT BIOGENESIS GTPASE RSGA"/>
    <property type="match status" value="1"/>
</dbReference>
<dbReference type="PANTHER" id="PTHR32120:SF11">
    <property type="entry name" value="SMALL RIBOSOMAL SUBUNIT BIOGENESIS GTPASE RSGA 1, MITOCHONDRIAL-RELATED"/>
    <property type="match status" value="1"/>
</dbReference>
<dbReference type="Pfam" id="PF03193">
    <property type="entry name" value="RsgA_GTPase"/>
    <property type="match status" value="1"/>
</dbReference>
<dbReference type="Pfam" id="PF16745">
    <property type="entry name" value="RsgA_N"/>
    <property type="match status" value="1"/>
</dbReference>
<dbReference type="SUPFAM" id="SSF50249">
    <property type="entry name" value="Nucleic acid-binding proteins"/>
    <property type="match status" value="1"/>
</dbReference>
<dbReference type="SUPFAM" id="SSF52540">
    <property type="entry name" value="P-loop containing nucleoside triphosphate hydrolases"/>
    <property type="match status" value="1"/>
</dbReference>
<dbReference type="PROSITE" id="PS50936">
    <property type="entry name" value="ENGC_GTPASE"/>
    <property type="match status" value="1"/>
</dbReference>
<dbReference type="PROSITE" id="PS51721">
    <property type="entry name" value="G_CP"/>
    <property type="match status" value="1"/>
</dbReference>
<gene>
    <name evidence="1" type="primary">rsgA</name>
    <name type="ordered locus">FN0679</name>
</gene>
<organism>
    <name type="scientific">Fusobacterium nucleatum subsp. nucleatum (strain ATCC 25586 / DSM 15643 / BCRC 10681 / CIP 101130 / JCM 8532 / KCTC 2640 / LMG 13131 / VPI 4355)</name>
    <dbReference type="NCBI Taxonomy" id="190304"/>
    <lineage>
        <taxon>Bacteria</taxon>
        <taxon>Fusobacteriati</taxon>
        <taxon>Fusobacteriota</taxon>
        <taxon>Fusobacteriia</taxon>
        <taxon>Fusobacteriales</taxon>
        <taxon>Fusobacteriaceae</taxon>
        <taxon>Fusobacterium</taxon>
    </lineage>
</organism>
<proteinExistence type="inferred from homology"/>
<accession>Q8R685</accession>
<feature type="chain" id="PRO_0000171478" description="Small ribosomal subunit biogenesis GTPase RsgA">
    <location>
        <begin position="1"/>
        <end position="285"/>
    </location>
</feature>
<feature type="domain" description="CP-type G" evidence="2">
    <location>
        <begin position="56"/>
        <end position="217"/>
    </location>
</feature>
<feature type="binding site" evidence="1">
    <location>
        <begin position="105"/>
        <end position="108"/>
    </location>
    <ligand>
        <name>GTP</name>
        <dbReference type="ChEBI" id="CHEBI:37565"/>
    </ligand>
</feature>
<feature type="binding site" evidence="1">
    <location>
        <begin position="159"/>
        <end position="167"/>
    </location>
    <ligand>
        <name>GTP</name>
        <dbReference type="ChEBI" id="CHEBI:37565"/>
    </ligand>
</feature>
<feature type="binding site" evidence="1">
    <location>
        <position position="241"/>
    </location>
    <ligand>
        <name>Zn(2+)</name>
        <dbReference type="ChEBI" id="CHEBI:29105"/>
    </ligand>
</feature>
<feature type="binding site" evidence="1">
    <location>
        <position position="246"/>
    </location>
    <ligand>
        <name>Zn(2+)</name>
        <dbReference type="ChEBI" id="CHEBI:29105"/>
    </ligand>
</feature>
<feature type="binding site" evidence="1">
    <location>
        <position position="248"/>
    </location>
    <ligand>
        <name>Zn(2+)</name>
        <dbReference type="ChEBI" id="CHEBI:29105"/>
    </ligand>
</feature>
<feature type="binding site" evidence="1">
    <location>
        <position position="254"/>
    </location>
    <ligand>
        <name>Zn(2+)</name>
        <dbReference type="ChEBI" id="CHEBI:29105"/>
    </ligand>
</feature>
<name>RSGA_FUSNN</name>
<evidence type="ECO:0000255" key="1">
    <source>
        <dbReference type="HAMAP-Rule" id="MF_01820"/>
    </source>
</evidence>
<evidence type="ECO:0000255" key="2">
    <source>
        <dbReference type="PROSITE-ProRule" id="PRU01058"/>
    </source>
</evidence>